<keyword id="KW-0131">Cell cycle</keyword>
<keyword id="KW-0132">Cell division</keyword>
<keyword id="KW-1003">Cell membrane</keyword>
<keyword id="KW-0133">Cell shape</keyword>
<keyword id="KW-0961">Cell wall biogenesis/degradation</keyword>
<keyword id="KW-0460">Magnesium</keyword>
<keyword id="KW-0472">Membrane</keyword>
<keyword id="KW-0479">Metal-binding</keyword>
<keyword id="KW-0573">Peptidoglycan synthesis</keyword>
<keyword id="KW-0808">Transferase</keyword>
<keyword id="KW-0812">Transmembrane</keyword>
<keyword id="KW-1133">Transmembrane helix</keyword>
<feature type="chain" id="PRO_1000071048" description="Phospho-N-acetylmuramoyl-pentapeptide-transferase">
    <location>
        <begin position="1"/>
        <end position="322"/>
    </location>
</feature>
<feature type="transmembrane region" description="Helical" evidence="1">
    <location>
        <begin position="6"/>
        <end position="26"/>
    </location>
</feature>
<feature type="transmembrane region" description="Helical" evidence="1">
    <location>
        <begin position="54"/>
        <end position="74"/>
    </location>
</feature>
<feature type="transmembrane region" description="Helical" evidence="1">
    <location>
        <begin position="82"/>
        <end position="102"/>
    </location>
</feature>
<feature type="transmembrane region" description="Helical" evidence="1">
    <location>
        <begin position="122"/>
        <end position="142"/>
    </location>
</feature>
<feature type="transmembrane region" description="Helical" evidence="1">
    <location>
        <begin position="145"/>
        <end position="165"/>
    </location>
</feature>
<feature type="transmembrane region" description="Helical" evidence="1">
    <location>
        <begin position="176"/>
        <end position="196"/>
    </location>
</feature>
<feature type="transmembrane region" description="Helical" evidence="1">
    <location>
        <begin position="200"/>
        <end position="220"/>
    </location>
</feature>
<feature type="transmembrane region" description="Helical" evidence="1">
    <location>
        <begin position="227"/>
        <end position="247"/>
    </location>
</feature>
<feature type="transmembrane region" description="Helical" evidence="1">
    <location>
        <begin position="255"/>
        <end position="275"/>
    </location>
</feature>
<feature type="transmembrane region" description="Helical" evidence="1">
    <location>
        <begin position="302"/>
        <end position="322"/>
    </location>
</feature>
<proteinExistence type="inferred from homology"/>
<comment type="function">
    <text evidence="1">Catalyzes the initial step of the lipid cycle reactions in the biosynthesis of the cell wall peptidoglycan: transfers peptidoglycan precursor phospho-MurNAc-pentapeptide from UDP-MurNAc-pentapeptide onto the lipid carrier undecaprenyl phosphate, yielding undecaprenyl-pyrophosphoryl-MurNAc-pentapeptide, known as lipid I.</text>
</comment>
<comment type="catalytic activity">
    <reaction evidence="1">
        <text>UDP-N-acetyl-alpha-D-muramoyl-L-alanyl-gamma-D-glutamyl-L-lysyl-D-alanyl-D-alanine + di-trans,octa-cis-undecaprenyl phosphate = Mur2Ac(oyl-L-Ala-gamma-D-Glu-L-Lys-D-Ala-D-Ala)-di-trans,octa-cis-undecaprenyl diphosphate + UMP</text>
        <dbReference type="Rhea" id="RHEA:21920"/>
        <dbReference type="ChEBI" id="CHEBI:57865"/>
        <dbReference type="ChEBI" id="CHEBI:60032"/>
        <dbReference type="ChEBI" id="CHEBI:60392"/>
        <dbReference type="ChEBI" id="CHEBI:70758"/>
        <dbReference type="EC" id="2.7.8.13"/>
    </reaction>
</comment>
<comment type="cofactor">
    <cofactor evidence="1">
        <name>Mg(2+)</name>
        <dbReference type="ChEBI" id="CHEBI:18420"/>
    </cofactor>
</comment>
<comment type="pathway">
    <text evidence="1">Cell wall biogenesis; peptidoglycan biosynthesis.</text>
</comment>
<comment type="subcellular location">
    <subcellularLocation>
        <location evidence="1">Cell membrane</location>
        <topology evidence="1">Multi-pass membrane protein</topology>
    </subcellularLocation>
</comment>
<comment type="similarity">
    <text evidence="1">Belongs to the glycosyltransferase 4 family. MraY subfamily.</text>
</comment>
<protein>
    <recommendedName>
        <fullName evidence="1">Phospho-N-acetylmuramoyl-pentapeptide-transferase</fullName>
        <ecNumber evidence="1">2.7.8.13</ecNumber>
    </recommendedName>
    <alternativeName>
        <fullName evidence="1">UDP-MurNAc-pentapeptide phosphotransferase</fullName>
    </alternativeName>
</protein>
<reference key="1">
    <citation type="journal article" date="2008" name="J. Bacteriol.">
        <title>Genome sequence of Lactobacillus helveticus: an organism distinguished by selective gene loss and IS element expansion.</title>
        <authorList>
            <person name="Callanan M."/>
            <person name="Kaleta P."/>
            <person name="O'Callaghan J."/>
            <person name="O'Sullivan O."/>
            <person name="Jordan K."/>
            <person name="McAuliffe O."/>
            <person name="Sangrador-Vegas A."/>
            <person name="Slattery L."/>
            <person name="Fitzgerald G.F."/>
            <person name="Beresford T."/>
            <person name="Ross R.P."/>
        </authorList>
    </citation>
    <scope>NUCLEOTIDE SEQUENCE [LARGE SCALE GENOMIC DNA]</scope>
    <source>
        <strain>DPC 4571</strain>
    </source>
</reference>
<accession>A8YUN7</accession>
<organism>
    <name type="scientific">Lactobacillus helveticus (strain DPC 4571)</name>
    <dbReference type="NCBI Taxonomy" id="405566"/>
    <lineage>
        <taxon>Bacteria</taxon>
        <taxon>Bacillati</taxon>
        <taxon>Bacillota</taxon>
        <taxon>Bacilli</taxon>
        <taxon>Lactobacillales</taxon>
        <taxon>Lactobacillaceae</taxon>
        <taxon>Lactobacillus</taxon>
    </lineage>
</organism>
<name>MRAY_LACH4</name>
<evidence type="ECO:0000255" key="1">
    <source>
        <dbReference type="HAMAP-Rule" id="MF_00038"/>
    </source>
</evidence>
<gene>
    <name evidence="1" type="primary">mraY</name>
    <name type="ordered locus">lhv_0854</name>
</gene>
<dbReference type="EC" id="2.7.8.13" evidence="1"/>
<dbReference type="EMBL" id="CP000517">
    <property type="protein sequence ID" value="ABX26975.1"/>
    <property type="molecule type" value="Genomic_DNA"/>
</dbReference>
<dbReference type="RefSeq" id="WP_003627667.1">
    <property type="nucleotide sequence ID" value="NC_010080.1"/>
</dbReference>
<dbReference type="SMR" id="A8YUN7"/>
<dbReference type="KEGG" id="lhe:lhv_0854"/>
<dbReference type="eggNOG" id="COG0472">
    <property type="taxonomic scope" value="Bacteria"/>
</dbReference>
<dbReference type="HOGENOM" id="CLU_023982_0_1_9"/>
<dbReference type="UniPathway" id="UPA00219"/>
<dbReference type="Proteomes" id="UP000000790">
    <property type="component" value="Chromosome"/>
</dbReference>
<dbReference type="GO" id="GO:0005886">
    <property type="term" value="C:plasma membrane"/>
    <property type="evidence" value="ECO:0007669"/>
    <property type="project" value="UniProtKB-SubCell"/>
</dbReference>
<dbReference type="GO" id="GO:0046872">
    <property type="term" value="F:metal ion binding"/>
    <property type="evidence" value="ECO:0007669"/>
    <property type="project" value="UniProtKB-KW"/>
</dbReference>
<dbReference type="GO" id="GO:0008963">
    <property type="term" value="F:phospho-N-acetylmuramoyl-pentapeptide-transferase activity"/>
    <property type="evidence" value="ECO:0007669"/>
    <property type="project" value="UniProtKB-UniRule"/>
</dbReference>
<dbReference type="GO" id="GO:0051301">
    <property type="term" value="P:cell division"/>
    <property type="evidence" value="ECO:0007669"/>
    <property type="project" value="UniProtKB-KW"/>
</dbReference>
<dbReference type="GO" id="GO:0071555">
    <property type="term" value="P:cell wall organization"/>
    <property type="evidence" value="ECO:0007669"/>
    <property type="project" value="UniProtKB-KW"/>
</dbReference>
<dbReference type="GO" id="GO:0009252">
    <property type="term" value="P:peptidoglycan biosynthetic process"/>
    <property type="evidence" value="ECO:0007669"/>
    <property type="project" value="UniProtKB-UniRule"/>
</dbReference>
<dbReference type="GO" id="GO:0008360">
    <property type="term" value="P:regulation of cell shape"/>
    <property type="evidence" value="ECO:0007669"/>
    <property type="project" value="UniProtKB-KW"/>
</dbReference>
<dbReference type="CDD" id="cd06852">
    <property type="entry name" value="GT_MraY"/>
    <property type="match status" value="1"/>
</dbReference>
<dbReference type="HAMAP" id="MF_00038">
    <property type="entry name" value="MraY"/>
    <property type="match status" value="1"/>
</dbReference>
<dbReference type="InterPro" id="IPR000715">
    <property type="entry name" value="Glycosyl_transferase_4"/>
</dbReference>
<dbReference type="InterPro" id="IPR003524">
    <property type="entry name" value="PNAcMuramoyl-5peptid_Trfase"/>
</dbReference>
<dbReference type="InterPro" id="IPR018480">
    <property type="entry name" value="PNAcMuramoyl-5peptid_Trfase_CS"/>
</dbReference>
<dbReference type="NCBIfam" id="TIGR00445">
    <property type="entry name" value="mraY"/>
    <property type="match status" value="1"/>
</dbReference>
<dbReference type="PANTHER" id="PTHR22926">
    <property type="entry name" value="PHOSPHO-N-ACETYLMURAMOYL-PENTAPEPTIDE-TRANSFERASE"/>
    <property type="match status" value="1"/>
</dbReference>
<dbReference type="PANTHER" id="PTHR22926:SF5">
    <property type="entry name" value="PHOSPHO-N-ACETYLMURAMOYL-PENTAPEPTIDE-TRANSFERASE HOMOLOG"/>
    <property type="match status" value="1"/>
</dbReference>
<dbReference type="Pfam" id="PF00953">
    <property type="entry name" value="Glycos_transf_4"/>
    <property type="match status" value="1"/>
</dbReference>
<dbReference type="Pfam" id="PF10555">
    <property type="entry name" value="MraY_sig1"/>
    <property type="match status" value="1"/>
</dbReference>
<dbReference type="PROSITE" id="PS01348">
    <property type="entry name" value="MRAY_2"/>
    <property type="match status" value="1"/>
</dbReference>
<sequence>MSIMQASCIALVSSLTLTVIFLPLLIKFMHSHHEGQEIRDEGPKWHQKKSGTPTMGGTIFVIAAVISVIWVTAWQHSLNKVVWILVISLLGYGIIGFLDDGIKLYYKRNLGLRAWQKLALQIIIAVVIVLIASSDHFNFGLYIPFAGVVHSVALFVIFIIFWLVGFSNAVNLSDGLDGLATGLSVVAYGTYAYIAFKQKNFAILAFCMSVIGGLIAFFIFNHKPAKIFMGDAGSLALGGGLATVSIMLNRPWSLLLVGIVFVCETASVIMQVISFQTTGKRIFKMTPIHHHFEMLGWSEWKVDIVFWIVGLVGSILYLAIWG</sequence>